<sequence length="252" mass="26638">MSRKPFIAGNWKMNKNPEEAKAFIEAVASKLPSSELVEAGIAAPALTLSTVLEAAKGSELKIAAQNSYFENSGAFTGENSPKVLAEMGTDYVVIGHSERRDYFHETDQDINKKAKAIFANGLTPIICCGESLETYEAGKAVEFVGAQVSAALAGLSEEQVSSLVIAYEPIWAIGTGKSATQDDAQNMCKAVRDVVAADFGQAVADKVRVQYGGSVKPENVAEYMACPDVDGALVGGASLEAESFLALLDFVK</sequence>
<protein>
    <recommendedName>
        <fullName evidence="1">Triosephosphate isomerase</fullName>
        <shortName evidence="1">TIM</shortName>
        <shortName evidence="1">TPI</shortName>
        <ecNumber evidence="1">5.3.1.1</ecNumber>
    </recommendedName>
    <alternativeName>
        <fullName evidence="1">Triose-phosphate isomerase</fullName>
    </alternativeName>
</protein>
<proteinExistence type="inferred from homology"/>
<reference key="1">
    <citation type="journal article" date="2005" name="Proc. Natl. Acad. Sci. U.S.A.">
        <title>Genome analysis of multiple pathogenic isolates of Streptococcus agalactiae: implications for the microbial 'pan-genome'.</title>
        <authorList>
            <person name="Tettelin H."/>
            <person name="Masignani V."/>
            <person name="Cieslewicz M.J."/>
            <person name="Donati C."/>
            <person name="Medini D."/>
            <person name="Ward N.L."/>
            <person name="Angiuoli S.V."/>
            <person name="Crabtree J."/>
            <person name="Jones A.L."/>
            <person name="Durkin A.S."/>
            <person name="DeBoy R.T."/>
            <person name="Davidsen T.M."/>
            <person name="Mora M."/>
            <person name="Scarselli M."/>
            <person name="Margarit y Ros I."/>
            <person name="Peterson J.D."/>
            <person name="Hauser C.R."/>
            <person name="Sundaram J.P."/>
            <person name="Nelson W.C."/>
            <person name="Madupu R."/>
            <person name="Brinkac L.M."/>
            <person name="Dodson R.J."/>
            <person name="Rosovitz M.J."/>
            <person name="Sullivan S.A."/>
            <person name="Daugherty S.C."/>
            <person name="Haft D.H."/>
            <person name="Selengut J."/>
            <person name="Gwinn M.L."/>
            <person name="Zhou L."/>
            <person name="Zafar N."/>
            <person name="Khouri H."/>
            <person name="Radune D."/>
            <person name="Dimitrov G."/>
            <person name="Watkins K."/>
            <person name="O'Connor K.J."/>
            <person name="Smith S."/>
            <person name="Utterback T.R."/>
            <person name="White O."/>
            <person name="Rubens C.E."/>
            <person name="Grandi G."/>
            <person name="Madoff L.C."/>
            <person name="Kasper D.L."/>
            <person name="Telford J.L."/>
            <person name="Wessels M.R."/>
            <person name="Rappuoli R."/>
            <person name="Fraser C.M."/>
        </authorList>
    </citation>
    <scope>NUCLEOTIDE SEQUENCE [LARGE SCALE GENOMIC DNA]</scope>
    <source>
        <strain>ATCC 27591 / A909 / CDC SS700</strain>
    </source>
</reference>
<name>TPIS_STRA1</name>
<evidence type="ECO:0000255" key="1">
    <source>
        <dbReference type="HAMAP-Rule" id="MF_00147"/>
    </source>
</evidence>
<organism>
    <name type="scientific">Streptococcus agalactiae serotype Ia (strain ATCC 27591 / A909 / CDC SS700)</name>
    <dbReference type="NCBI Taxonomy" id="205921"/>
    <lineage>
        <taxon>Bacteria</taxon>
        <taxon>Bacillati</taxon>
        <taxon>Bacillota</taxon>
        <taxon>Bacilli</taxon>
        <taxon>Lactobacillales</taxon>
        <taxon>Streptococcaceae</taxon>
        <taxon>Streptococcus</taxon>
    </lineage>
</organism>
<gene>
    <name evidence="1" type="primary">tpiA</name>
    <name type="ordered locus">SAK_0888</name>
</gene>
<dbReference type="EC" id="5.3.1.1" evidence="1"/>
<dbReference type="EMBL" id="CP000114">
    <property type="protein sequence ID" value="ABA46213.1"/>
    <property type="molecule type" value="Genomic_DNA"/>
</dbReference>
<dbReference type="RefSeq" id="WP_000087883.1">
    <property type="nucleotide sequence ID" value="NC_007432.1"/>
</dbReference>
<dbReference type="SMR" id="Q3K1U3"/>
<dbReference type="GeneID" id="66885715"/>
<dbReference type="KEGG" id="sak:SAK_0888"/>
<dbReference type="HOGENOM" id="CLU_024251_2_3_9"/>
<dbReference type="UniPathway" id="UPA00109">
    <property type="reaction ID" value="UER00189"/>
</dbReference>
<dbReference type="UniPathway" id="UPA00138"/>
<dbReference type="GO" id="GO:0005829">
    <property type="term" value="C:cytosol"/>
    <property type="evidence" value="ECO:0007669"/>
    <property type="project" value="TreeGrafter"/>
</dbReference>
<dbReference type="GO" id="GO:0004807">
    <property type="term" value="F:triose-phosphate isomerase activity"/>
    <property type="evidence" value="ECO:0007669"/>
    <property type="project" value="UniProtKB-UniRule"/>
</dbReference>
<dbReference type="GO" id="GO:0006094">
    <property type="term" value="P:gluconeogenesis"/>
    <property type="evidence" value="ECO:0007669"/>
    <property type="project" value="UniProtKB-UniRule"/>
</dbReference>
<dbReference type="GO" id="GO:0046166">
    <property type="term" value="P:glyceraldehyde-3-phosphate biosynthetic process"/>
    <property type="evidence" value="ECO:0007669"/>
    <property type="project" value="TreeGrafter"/>
</dbReference>
<dbReference type="GO" id="GO:0019563">
    <property type="term" value="P:glycerol catabolic process"/>
    <property type="evidence" value="ECO:0007669"/>
    <property type="project" value="TreeGrafter"/>
</dbReference>
<dbReference type="GO" id="GO:0006096">
    <property type="term" value="P:glycolytic process"/>
    <property type="evidence" value="ECO:0007669"/>
    <property type="project" value="UniProtKB-UniRule"/>
</dbReference>
<dbReference type="CDD" id="cd00311">
    <property type="entry name" value="TIM"/>
    <property type="match status" value="1"/>
</dbReference>
<dbReference type="FunFam" id="3.20.20.70:FF:000016">
    <property type="entry name" value="Triosephosphate isomerase"/>
    <property type="match status" value="1"/>
</dbReference>
<dbReference type="Gene3D" id="3.20.20.70">
    <property type="entry name" value="Aldolase class I"/>
    <property type="match status" value="1"/>
</dbReference>
<dbReference type="HAMAP" id="MF_00147_B">
    <property type="entry name" value="TIM_B"/>
    <property type="match status" value="1"/>
</dbReference>
<dbReference type="InterPro" id="IPR013785">
    <property type="entry name" value="Aldolase_TIM"/>
</dbReference>
<dbReference type="InterPro" id="IPR035990">
    <property type="entry name" value="TIM_sf"/>
</dbReference>
<dbReference type="InterPro" id="IPR022896">
    <property type="entry name" value="TrioseP_Isoase_bac/euk"/>
</dbReference>
<dbReference type="InterPro" id="IPR000652">
    <property type="entry name" value="Triosephosphate_isomerase"/>
</dbReference>
<dbReference type="InterPro" id="IPR020861">
    <property type="entry name" value="Triosephosphate_isomerase_AS"/>
</dbReference>
<dbReference type="NCBIfam" id="TIGR00419">
    <property type="entry name" value="tim"/>
    <property type="match status" value="1"/>
</dbReference>
<dbReference type="PANTHER" id="PTHR21139">
    <property type="entry name" value="TRIOSEPHOSPHATE ISOMERASE"/>
    <property type="match status" value="1"/>
</dbReference>
<dbReference type="PANTHER" id="PTHR21139:SF42">
    <property type="entry name" value="TRIOSEPHOSPHATE ISOMERASE"/>
    <property type="match status" value="1"/>
</dbReference>
<dbReference type="Pfam" id="PF00121">
    <property type="entry name" value="TIM"/>
    <property type="match status" value="1"/>
</dbReference>
<dbReference type="SUPFAM" id="SSF51351">
    <property type="entry name" value="Triosephosphate isomerase (TIM)"/>
    <property type="match status" value="1"/>
</dbReference>
<dbReference type="PROSITE" id="PS00171">
    <property type="entry name" value="TIM_1"/>
    <property type="match status" value="1"/>
</dbReference>
<dbReference type="PROSITE" id="PS51440">
    <property type="entry name" value="TIM_2"/>
    <property type="match status" value="1"/>
</dbReference>
<comment type="function">
    <text evidence="1">Involved in the gluconeogenesis. Catalyzes stereospecifically the conversion of dihydroxyacetone phosphate (DHAP) to D-glyceraldehyde-3-phosphate (G3P).</text>
</comment>
<comment type="catalytic activity">
    <reaction evidence="1">
        <text>D-glyceraldehyde 3-phosphate = dihydroxyacetone phosphate</text>
        <dbReference type="Rhea" id="RHEA:18585"/>
        <dbReference type="ChEBI" id="CHEBI:57642"/>
        <dbReference type="ChEBI" id="CHEBI:59776"/>
        <dbReference type="EC" id="5.3.1.1"/>
    </reaction>
</comment>
<comment type="pathway">
    <text evidence="1">Carbohydrate biosynthesis; gluconeogenesis.</text>
</comment>
<comment type="pathway">
    <text evidence="1">Carbohydrate degradation; glycolysis; D-glyceraldehyde 3-phosphate from glycerone phosphate: step 1/1.</text>
</comment>
<comment type="subunit">
    <text evidence="1">Homodimer.</text>
</comment>
<comment type="subcellular location">
    <subcellularLocation>
        <location evidence="1">Cytoplasm</location>
    </subcellularLocation>
</comment>
<comment type="similarity">
    <text evidence="1">Belongs to the triosephosphate isomerase family.</text>
</comment>
<feature type="chain" id="PRO_0000307571" description="Triosephosphate isomerase">
    <location>
        <begin position="1"/>
        <end position="252"/>
    </location>
</feature>
<feature type="active site" description="Electrophile" evidence="1">
    <location>
        <position position="96"/>
    </location>
</feature>
<feature type="active site" description="Proton acceptor" evidence="1">
    <location>
        <position position="168"/>
    </location>
</feature>
<feature type="binding site" evidence="1">
    <location>
        <begin position="10"/>
        <end position="12"/>
    </location>
    <ligand>
        <name>substrate</name>
    </ligand>
</feature>
<feature type="binding site" evidence="1">
    <location>
        <position position="174"/>
    </location>
    <ligand>
        <name>substrate</name>
    </ligand>
</feature>
<feature type="binding site" evidence="1">
    <location>
        <position position="214"/>
    </location>
    <ligand>
        <name>substrate</name>
    </ligand>
</feature>
<feature type="binding site" evidence="1">
    <location>
        <begin position="235"/>
        <end position="236"/>
    </location>
    <ligand>
        <name>substrate</name>
    </ligand>
</feature>
<keyword id="KW-0963">Cytoplasm</keyword>
<keyword id="KW-0312">Gluconeogenesis</keyword>
<keyword id="KW-0324">Glycolysis</keyword>
<keyword id="KW-0413">Isomerase</keyword>
<accession>Q3K1U3</accession>